<protein>
    <recommendedName>
        <fullName evidence="1">Tyrosine--tRNA ligase 2</fullName>
        <ecNumber evidence="1">6.1.1.1</ecNumber>
    </recommendedName>
    <alternativeName>
        <fullName evidence="1">Tyrosyl-tRNA synthetase 2</fullName>
        <shortName evidence="1">TyrRS 2</shortName>
    </alternativeName>
</protein>
<name>SYY2_CLOAB</name>
<gene>
    <name evidence="1" type="primary">tyrS2</name>
    <name type="ordered locus">CA_C0780</name>
</gene>
<comment type="function">
    <text evidence="1">Catalyzes the attachment of tyrosine to tRNA(Tyr) in a two-step reaction: tyrosine is first activated by ATP to form Tyr-AMP and then transferred to the acceptor end of tRNA(Tyr).</text>
</comment>
<comment type="catalytic activity">
    <reaction evidence="1">
        <text>tRNA(Tyr) + L-tyrosine + ATP = L-tyrosyl-tRNA(Tyr) + AMP + diphosphate + H(+)</text>
        <dbReference type="Rhea" id="RHEA:10220"/>
        <dbReference type="Rhea" id="RHEA-COMP:9706"/>
        <dbReference type="Rhea" id="RHEA-COMP:9707"/>
        <dbReference type="ChEBI" id="CHEBI:15378"/>
        <dbReference type="ChEBI" id="CHEBI:30616"/>
        <dbReference type="ChEBI" id="CHEBI:33019"/>
        <dbReference type="ChEBI" id="CHEBI:58315"/>
        <dbReference type="ChEBI" id="CHEBI:78442"/>
        <dbReference type="ChEBI" id="CHEBI:78536"/>
        <dbReference type="ChEBI" id="CHEBI:456215"/>
        <dbReference type="EC" id="6.1.1.1"/>
    </reaction>
</comment>
<comment type="subunit">
    <text evidence="1">Homodimer.</text>
</comment>
<comment type="subcellular location">
    <subcellularLocation>
        <location evidence="1">Cytoplasm</location>
    </subcellularLocation>
</comment>
<comment type="similarity">
    <text evidence="1">Belongs to the class-I aminoacyl-tRNA synthetase family. TyrS type 2 subfamily.</text>
</comment>
<feature type="chain" id="PRO_0000236710" description="Tyrosine--tRNA ligase 2">
    <location>
        <begin position="1"/>
        <end position="400"/>
    </location>
</feature>
<feature type="domain" description="S4 RNA-binding" evidence="1">
    <location>
        <begin position="339"/>
        <end position="399"/>
    </location>
</feature>
<feature type="short sequence motif" description="'HIGH' region">
    <location>
        <begin position="46"/>
        <end position="55"/>
    </location>
</feature>
<feature type="short sequence motif" description="'KMSKS' region">
    <location>
        <begin position="230"/>
        <end position="234"/>
    </location>
</feature>
<feature type="binding site" evidence="1">
    <location>
        <position position="233"/>
    </location>
    <ligand>
        <name>ATP</name>
        <dbReference type="ChEBI" id="CHEBI:30616"/>
    </ligand>
</feature>
<dbReference type="EC" id="6.1.1.1" evidence="1"/>
<dbReference type="EMBL" id="AE001437">
    <property type="protein sequence ID" value="AAK78756.1"/>
    <property type="molecule type" value="Genomic_DNA"/>
</dbReference>
<dbReference type="PIR" id="A96996">
    <property type="entry name" value="A96996"/>
</dbReference>
<dbReference type="RefSeq" id="NP_347416.1">
    <property type="nucleotide sequence ID" value="NC_003030.1"/>
</dbReference>
<dbReference type="SMR" id="Q97KY6"/>
<dbReference type="STRING" id="272562.CA_C0780"/>
<dbReference type="KEGG" id="cac:CA_C0780"/>
<dbReference type="PATRIC" id="fig|272562.8.peg.985"/>
<dbReference type="eggNOG" id="COG0162">
    <property type="taxonomic scope" value="Bacteria"/>
</dbReference>
<dbReference type="HOGENOM" id="CLU_024003_5_0_9"/>
<dbReference type="OrthoDB" id="9804243at2"/>
<dbReference type="Proteomes" id="UP000000814">
    <property type="component" value="Chromosome"/>
</dbReference>
<dbReference type="GO" id="GO:0005829">
    <property type="term" value="C:cytosol"/>
    <property type="evidence" value="ECO:0007669"/>
    <property type="project" value="TreeGrafter"/>
</dbReference>
<dbReference type="GO" id="GO:0005524">
    <property type="term" value="F:ATP binding"/>
    <property type="evidence" value="ECO:0007669"/>
    <property type="project" value="UniProtKB-UniRule"/>
</dbReference>
<dbReference type="GO" id="GO:0003723">
    <property type="term" value="F:RNA binding"/>
    <property type="evidence" value="ECO:0007669"/>
    <property type="project" value="UniProtKB-KW"/>
</dbReference>
<dbReference type="GO" id="GO:0004831">
    <property type="term" value="F:tyrosine-tRNA ligase activity"/>
    <property type="evidence" value="ECO:0007669"/>
    <property type="project" value="UniProtKB-UniRule"/>
</dbReference>
<dbReference type="GO" id="GO:0006437">
    <property type="term" value="P:tyrosyl-tRNA aminoacylation"/>
    <property type="evidence" value="ECO:0007669"/>
    <property type="project" value="UniProtKB-UniRule"/>
</dbReference>
<dbReference type="CDD" id="cd00165">
    <property type="entry name" value="S4"/>
    <property type="match status" value="1"/>
</dbReference>
<dbReference type="CDD" id="cd00805">
    <property type="entry name" value="TyrRS_core"/>
    <property type="match status" value="1"/>
</dbReference>
<dbReference type="FunFam" id="1.10.240.10:FF:000006">
    <property type="entry name" value="Tyrosine--tRNA ligase"/>
    <property type="match status" value="1"/>
</dbReference>
<dbReference type="FunFam" id="3.40.50.620:FF:000061">
    <property type="entry name" value="Tyrosine--tRNA ligase"/>
    <property type="match status" value="1"/>
</dbReference>
<dbReference type="Gene3D" id="3.40.50.620">
    <property type="entry name" value="HUPs"/>
    <property type="match status" value="1"/>
</dbReference>
<dbReference type="Gene3D" id="3.10.290.10">
    <property type="entry name" value="RNA-binding S4 domain"/>
    <property type="match status" value="1"/>
</dbReference>
<dbReference type="Gene3D" id="1.10.240.10">
    <property type="entry name" value="Tyrosyl-Transfer RNA Synthetase"/>
    <property type="match status" value="1"/>
</dbReference>
<dbReference type="HAMAP" id="MF_02007">
    <property type="entry name" value="Tyr_tRNA_synth_type2"/>
    <property type="match status" value="1"/>
</dbReference>
<dbReference type="InterPro" id="IPR001412">
    <property type="entry name" value="aa-tRNA-synth_I_CS"/>
</dbReference>
<dbReference type="InterPro" id="IPR002305">
    <property type="entry name" value="aa-tRNA-synth_Ic"/>
</dbReference>
<dbReference type="InterPro" id="IPR014729">
    <property type="entry name" value="Rossmann-like_a/b/a_fold"/>
</dbReference>
<dbReference type="InterPro" id="IPR002942">
    <property type="entry name" value="S4_RNA-bd"/>
</dbReference>
<dbReference type="InterPro" id="IPR036986">
    <property type="entry name" value="S4_RNA-bd_sf"/>
</dbReference>
<dbReference type="InterPro" id="IPR054608">
    <property type="entry name" value="SYY-like_C"/>
</dbReference>
<dbReference type="InterPro" id="IPR002307">
    <property type="entry name" value="Tyr-tRNA-ligase"/>
</dbReference>
<dbReference type="InterPro" id="IPR024088">
    <property type="entry name" value="Tyr-tRNA-ligase_bac-type"/>
</dbReference>
<dbReference type="InterPro" id="IPR024108">
    <property type="entry name" value="Tyr-tRNA-ligase_bac_2"/>
</dbReference>
<dbReference type="NCBIfam" id="TIGR00234">
    <property type="entry name" value="tyrS"/>
    <property type="match status" value="1"/>
</dbReference>
<dbReference type="PANTHER" id="PTHR11766:SF1">
    <property type="entry name" value="TYROSINE--TRNA LIGASE"/>
    <property type="match status" value="1"/>
</dbReference>
<dbReference type="PANTHER" id="PTHR11766">
    <property type="entry name" value="TYROSYL-TRNA SYNTHETASE"/>
    <property type="match status" value="1"/>
</dbReference>
<dbReference type="Pfam" id="PF22421">
    <property type="entry name" value="SYY_C-terminal"/>
    <property type="match status" value="1"/>
</dbReference>
<dbReference type="Pfam" id="PF00579">
    <property type="entry name" value="tRNA-synt_1b"/>
    <property type="match status" value="1"/>
</dbReference>
<dbReference type="PRINTS" id="PR01040">
    <property type="entry name" value="TRNASYNTHTYR"/>
</dbReference>
<dbReference type="SMART" id="SM00363">
    <property type="entry name" value="S4"/>
    <property type="match status" value="1"/>
</dbReference>
<dbReference type="SUPFAM" id="SSF55174">
    <property type="entry name" value="Alpha-L RNA-binding motif"/>
    <property type="match status" value="1"/>
</dbReference>
<dbReference type="SUPFAM" id="SSF52374">
    <property type="entry name" value="Nucleotidylyl transferase"/>
    <property type="match status" value="1"/>
</dbReference>
<dbReference type="PROSITE" id="PS00178">
    <property type="entry name" value="AA_TRNA_LIGASE_I"/>
    <property type="match status" value="1"/>
</dbReference>
<dbReference type="PROSITE" id="PS50889">
    <property type="entry name" value="S4"/>
    <property type="match status" value="1"/>
</dbReference>
<keyword id="KW-0030">Aminoacyl-tRNA synthetase</keyword>
<keyword id="KW-0067">ATP-binding</keyword>
<keyword id="KW-0963">Cytoplasm</keyword>
<keyword id="KW-0436">Ligase</keyword>
<keyword id="KW-0547">Nucleotide-binding</keyword>
<keyword id="KW-0648">Protein biosynthesis</keyword>
<keyword id="KW-1185">Reference proteome</keyword>
<keyword id="KW-0694">RNA-binding</keyword>
<accession>Q97KY6</accession>
<sequence length="400" mass="45990">MKNIDEQIKIIKKGAEEIIDAKELKEKLIKAEKENTQLVVKLGLDPSAPDIHLGHAVVLRKLKQLQDLGHKIVIIIGDFTGMIGDPTGKSKTRKQLSSQQVMKNAETYEKQIFKILDRNKTDLRFNSQWLEKLNFKEVIELASKYTVARMLEREDFKKRFKNQQSIGIHEFFYPLMQAYDSMAIKADIEFGGTDQRFNLLMGRTLQAEYGEEKQIAIFMPLLEGIDGKEKMSKSLGNYIGIEESAKDMYVKVMQIPDSLIIKYFELCTDMHPDAIDIIRKQLNEDKVNPRDIKMKLAKEIVCLYHNEAEALNAEIYFKNLFQDKEIPEDIPIFKVRSENNLIEAIVKINSNTSKSEARRLIAQGGVKLNGRKVIDFNDIILKSNDVIQIGKKKIVKLLVE</sequence>
<organism>
    <name type="scientific">Clostridium acetobutylicum (strain ATCC 824 / DSM 792 / JCM 1419 / IAM 19013 / LMG 5710 / NBRC 13948 / NRRL B-527 / VKM B-1787 / 2291 / W)</name>
    <dbReference type="NCBI Taxonomy" id="272562"/>
    <lineage>
        <taxon>Bacteria</taxon>
        <taxon>Bacillati</taxon>
        <taxon>Bacillota</taxon>
        <taxon>Clostridia</taxon>
        <taxon>Eubacteriales</taxon>
        <taxon>Clostridiaceae</taxon>
        <taxon>Clostridium</taxon>
    </lineage>
</organism>
<proteinExistence type="inferred from homology"/>
<reference key="1">
    <citation type="journal article" date="2001" name="J. Bacteriol.">
        <title>Genome sequence and comparative analysis of the solvent-producing bacterium Clostridium acetobutylicum.</title>
        <authorList>
            <person name="Noelling J."/>
            <person name="Breton G."/>
            <person name="Omelchenko M.V."/>
            <person name="Makarova K.S."/>
            <person name="Zeng Q."/>
            <person name="Gibson R."/>
            <person name="Lee H.M."/>
            <person name="Dubois J."/>
            <person name="Qiu D."/>
            <person name="Hitti J."/>
            <person name="Wolf Y.I."/>
            <person name="Tatusov R.L."/>
            <person name="Sabathe F."/>
            <person name="Doucette-Stamm L.A."/>
            <person name="Soucaille P."/>
            <person name="Daly M.J."/>
            <person name="Bennett G.N."/>
            <person name="Koonin E.V."/>
            <person name="Smith D.R."/>
        </authorList>
    </citation>
    <scope>NUCLEOTIDE SEQUENCE [LARGE SCALE GENOMIC DNA]</scope>
    <source>
        <strain>ATCC 824 / DSM 792 / JCM 1419 / IAM 19013 / LMG 5710 / NBRC 13948 / NRRL B-527 / VKM B-1787 / 2291 / W</strain>
    </source>
</reference>
<evidence type="ECO:0000255" key="1">
    <source>
        <dbReference type="HAMAP-Rule" id="MF_02007"/>
    </source>
</evidence>